<reference key="1">
    <citation type="submission" date="2004-07" db="EMBL/GenBank/DDBJ databases">
        <authorList>
            <consortium name="NIH - Zebrafish Gene Collection (ZGC) project"/>
        </authorList>
    </citation>
    <scope>NUCLEOTIDE SEQUENCE [LARGE SCALE MRNA]</scope>
    <source>
        <tissue>Embryo</tissue>
    </source>
</reference>
<comment type="function">
    <text evidence="1">Scaffold protein component of the PI(3,5)P2 regulatory complex which regulates both the synthesis and turnover of phosphatidylinositol 3,5-bisphosphate (PtdIns(3,5)P2). Pentamerizes into a star-shaped structure and nucleates the assembly of the complex. The pentamer binds a single copy each of PIKFYVE and FIG4 and coordinates both PIKfyve kinase activity and FIG4 phosphatase activity, being required to maintain normal levels of phosphatidylinositol 3-phosphate (PtdIns(3)P) and phosphatidylinositol 5-phosphate (PtdIns(5)P). Plays a role in the biogenesis of endosome carrier vesicles (ECV) / multivesicular bodies (MVB) transport intermediates from early endosomes.</text>
</comment>
<comment type="subunit">
    <text evidence="1">Forms pentamers. Component of the PI(3,5)P2 regulatory complex/PAS complex, at least composed of PIKFYVE, FIG4 and VAC14. VAC14 nucleates the assembly of the complex and serves as a scaffold by pentamerizing into a star-shaped structure, which can bind a single copy each of PIKFYVE and FIG4 and coordinates their activities. Interacts with NOS1.</text>
</comment>
<comment type="subcellular location">
    <subcellularLocation>
        <location evidence="1">Endosome membrane</location>
    </subcellularLocation>
    <subcellularLocation>
        <location evidence="2">Microsome membrane</location>
    </subcellularLocation>
    <text evidence="1">Mainly associated with membranes of the late endocytic pathway.</text>
</comment>
<comment type="domain">
    <text evidence="1">The C-terminal domain (residues 523-782) mediates pentameric interactions and is necessary for the formation and maintenance of the PI(3,5)P2 regulatory complex.</text>
</comment>
<comment type="similarity">
    <text evidence="4">Belongs to the VAC14 family.</text>
</comment>
<sequence>MNTEKDFSPLTPNIVRALNDKLYEKRKVAALEIEKLVREFVAQNNSAQIRHVIQILATEFALSQHPHSRKGGLIGLAACSIALGKDSGLYLKELIDPVLTCFNDSDSRLRYYACEALYNIVKVARGAVLPHFNVLFDGLSKLAADPDPNVKSGSELLDRLLKDIVTESNKFDLVAFVPLLRERIYSNNQYARQFIISWIHVLESVPDINLLDYLPEILDGLFQILGDSSKEIRRMCELVLGEFLKEIKKNPSSVKFAEMANILVIHCQVSDESKSTNDLIQLTSMTWMREFIQLAGRVVLPYSSGILTAVLPCLSYDDRKKSTKEAASACNHSLMKLVTPEDDEDDEESQTKSSPPSDEAPSKKEGDLNDSLNESQESVGFSNISFFTPASSDRSAVTLDLDGIVQVLDRHLHDSSTGMMTRIAVLKWLYHLYIKTPRKMFKHTDSLFPMLLKTLSDESDEVILKDLEVLAEIASSPAGQTDTSGSCDISDSKTELHIPGSKMTDLSPSTPSMNSYFYKFMINLLKRFSLERKLLEMRGAFIIRQLCLLLHAENIFHSMADILLKEEDLKFASTMVQTLNTILLTSAELFQLRNQLKDLRTQESCALFCCLYRSWCHNPVATVSLCFLTQNYRHAYDLIQKFGDLEVTVDFLMEVDKLVQLIESPIFTYLRLQLLDVEHNPYLIKALYGLLMLLPQSQAFQLLSHRLSCVPNPELMRTLEDQKVAVKDKHLAQPHIDYSELLQHFDRVQSKHLEVRHQRTGRSEHPDRKLM</sequence>
<proteinExistence type="evidence at transcript level"/>
<protein>
    <recommendedName>
        <fullName>Protein VAC14 homolog</fullName>
    </recommendedName>
</protein>
<dbReference type="EMBL" id="BC078425">
    <property type="protein sequence ID" value="AAH78425.1"/>
    <property type="molecule type" value="mRNA"/>
</dbReference>
<dbReference type="RefSeq" id="NP_001004650.1">
    <property type="nucleotide sequence ID" value="NM_001004650.1"/>
</dbReference>
<dbReference type="FunCoup" id="Q66L58">
    <property type="interactions" value="2302"/>
</dbReference>
<dbReference type="STRING" id="7955.ENSDARP00000003288"/>
<dbReference type="PaxDb" id="7955-ENSDARP00000003288"/>
<dbReference type="Ensembl" id="ENSDART00000009767">
    <property type="protein sequence ID" value="ENSDARP00000003288"/>
    <property type="gene ID" value="ENSDARG00000014303"/>
</dbReference>
<dbReference type="GeneID" id="447912"/>
<dbReference type="KEGG" id="dre:447912"/>
<dbReference type="AGR" id="ZFIN:ZDB-GENE-040912-82"/>
<dbReference type="CTD" id="55697"/>
<dbReference type="ZFIN" id="ZDB-GENE-040912-82">
    <property type="gene designation" value="vac14"/>
</dbReference>
<dbReference type="eggNOG" id="KOG0212">
    <property type="taxonomic scope" value="Eukaryota"/>
</dbReference>
<dbReference type="InParanoid" id="Q66L58"/>
<dbReference type="OrthoDB" id="5574975at2759"/>
<dbReference type="PhylomeDB" id="Q66L58"/>
<dbReference type="TreeFam" id="TF343690"/>
<dbReference type="PRO" id="PR:Q66L58"/>
<dbReference type="Proteomes" id="UP000000437">
    <property type="component" value="Chromosome 25"/>
</dbReference>
<dbReference type="Bgee" id="ENSDARG00000014303">
    <property type="expression patterns" value="Expressed in cleaving embryo and 23 other cell types or tissues"/>
</dbReference>
<dbReference type="ExpressionAtlas" id="Q66L58">
    <property type="expression patterns" value="baseline and differential"/>
</dbReference>
<dbReference type="GO" id="GO:0005783">
    <property type="term" value="C:endoplasmic reticulum"/>
    <property type="evidence" value="ECO:0007669"/>
    <property type="project" value="UniProtKB-KW"/>
</dbReference>
<dbReference type="GO" id="GO:0010008">
    <property type="term" value="C:endosome membrane"/>
    <property type="evidence" value="ECO:0000318"/>
    <property type="project" value="GO_Central"/>
</dbReference>
<dbReference type="GO" id="GO:0070772">
    <property type="term" value="C:PAS complex"/>
    <property type="evidence" value="ECO:0000318"/>
    <property type="project" value="GO_Central"/>
</dbReference>
<dbReference type="GO" id="GO:0006661">
    <property type="term" value="P:phosphatidylinositol biosynthetic process"/>
    <property type="evidence" value="ECO:0000318"/>
    <property type="project" value="GO_Central"/>
</dbReference>
<dbReference type="FunFam" id="1.25.10.10:FF:001093">
    <property type="entry name" value="Vac14, PIKFYVE complex component"/>
    <property type="match status" value="1"/>
</dbReference>
<dbReference type="Gene3D" id="1.25.10.10">
    <property type="entry name" value="Leucine-rich Repeat Variant"/>
    <property type="match status" value="2"/>
</dbReference>
<dbReference type="InterPro" id="IPR011989">
    <property type="entry name" value="ARM-like"/>
</dbReference>
<dbReference type="InterPro" id="IPR016024">
    <property type="entry name" value="ARM-type_fold"/>
</dbReference>
<dbReference type="InterPro" id="IPR026825">
    <property type="entry name" value="Vac14"/>
</dbReference>
<dbReference type="InterPro" id="IPR021841">
    <property type="entry name" value="VAC14_Fig4p-bd"/>
</dbReference>
<dbReference type="PANTHER" id="PTHR16023:SF0">
    <property type="entry name" value="PROTEIN VAC14 HOMOLOG"/>
    <property type="match status" value="1"/>
</dbReference>
<dbReference type="PANTHER" id="PTHR16023">
    <property type="entry name" value="TAX1 BINDING PROTEIN-RELATED"/>
    <property type="match status" value="1"/>
</dbReference>
<dbReference type="Pfam" id="PF12755">
    <property type="entry name" value="Vac14_Fab1_bd"/>
    <property type="match status" value="1"/>
</dbReference>
<dbReference type="Pfam" id="PF11916">
    <property type="entry name" value="Vac14_Fig4_bd"/>
    <property type="match status" value="1"/>
</dbReference>
<dbReference type="SUPFAM" id="SSF48371">
    <property type="entry name" value="ARM repeat"/>
    <property type="match status" value="1"/>
</dbReference>
<feature type="chain" id="PRO_0000300489" description="Protein VAC14 homolog">
    <location>
        <begin position="1"/>
        <end position="771"/>
    </location>
</feature>
<feature type="repeat" description="HEAT 1">
    <location>
        <begin position="5"/>
        <end position="42"/>
    </location>
</feature>
<feature type="repeat" description="HEAT 2">
    <location>
        <begin position="89"/>
        <end position="126"/>
    </location>
</feature>
<feature type="repeat" description="HEAT 3">
    <location>
        <begin position="171"/>
        <end position="208"/>
    </location>
</feature>
<feature type="repeat" description="HEAT 4">
    <location>
        <begin position="212"/>
        <end position="249"/>
    </location>
</feature>
<feature type="repeat" description="HEAT 5">
    <location>
        <begin position="442"/>
        <end position="479"/>
    </location>
</feature>
<feature type="repeat" description="HEAT 6">
    <location>
        <begin position="550"/>
        <end position="588"/>
    </location>
</feature>
<feature type="region of interest" description="Disordered" evidence="3">
    <location>
        <begin position="334"/>
        <end position="374"/>
    </location>
</feature>
<keyword id="KW-0256">Endoplasmic reticulum</keyword>
<keyword id="KW-0967">Endosome</keyword>
<keyword id="KW-0472">Membrane</keyword>
<keyword id="KW-0492">Microsome</keyword>
<keyword id="KW-1185">Reference proteome</keyword>
<keyword id="KW-0677">Repeat</keyword>
<organism>
    <name type="scientific">Danio rerio</name>
    <name type="common">Zebrafish</name>
    <name type="synonym">Brachydanio rerio</name>
    <dbReference type="NCBI Taxonomy" id="7955"/>
    <lineage>
        <taxon>Eukaryota</taxon>
        <taxon>Metazoa</taxon>
        <taxon>Chordata</taxon>
        <taxon>Craniata</taxon>
        <taxon>Vertebrata</taxon>
        <taxon>Euteleostomi</taxon>
        <taxon>Actinopterygii</taxon>
        <taxon>Neopterygii</taxon>
        <taxon>Teleostei</taxon>
        <taxon>Ostariophysi</taxon>
        <taxon>Cypriniformes</taxon>
        <taxon>Danionidae</taxon>
        <taxon>Danioninae</taxon>
        <taxon>Danio</taxon>
    </lineage>
</organism>
<accession>Q66L58</accession>
<evidence type="ECO:0000250" key="1">
    <source>
        <dbReference type="UniProtKB" id="Q08AM6"/>
    </source>
</evidence>
<evidence type="ECO:0000250" key="2">
    <source>
        <dbReference type="UniProtKB" id="Q80W92"/>
    </source>
</evidence>
<evidence type="ECO:0000256" key="3">
    <source>
        <dbReference type="SAM" id="MobiDB-lite"/>
    </source>
</evidence>
<evidence type="ECO:0000305" key="4"/>
<name>VAC14_DANRE</name>
<gene>
    <name type="primary">vac14</name>
    <name type="ORF">zgc:100945</name>
</gene>